<accession>P86601</accession>
<proteinExistence type="evidence at protein level"/>
<reference evidence="3" key="1">
    <citation type="journal article" date="2009" name="Toxicon">
        <title>Purification, characterization and cytotoxicity of malanin, a novel plant toxin from the seeds of Malania oleifera.</title>
        <authorList>
            <person name="Yuan Y."/>
            <person name="Dai X."/>
            <person name="Wang D."/>
            <person name="Zeng X."/>
        </authorList>
    </citation>
    <scope>PROTEIN SEQUENCE</scope>
    <scope>FUNCTION</scope>
    <scope>SUBUNIT</scope>
    <scope>GLYCOSYLATION</scope>
    <scope>MASS SPECTROMETRY</scope>
    <scope>TOXIC DOSE</scope>
    <source>
        <tissue evidence="1">Seed</tissue>
    </source>
</reference>
<dbReference type="GO" id="GO:0090729">
    <property type="term" value="F:toxin activity"/>
    <property type="evidence" value="ECO:0007669"/>
    <property type="project" value="UniProtKB-KW"/>
</dbReference>
<dbReference type="GO" id="GO:0006952">
    <property type="term" value="P:defense response"/>
    <property type="evidence" value="ECO:0007669"/>
    <property type="project" value="UniProtKB-KW"/>
</dbReference>
<sequence length="10" mass="1210">DETXTDEEFN</sequence>
<comment type="function">
    <text evidence="1">Significantly inhibits growth and induces an apoptotic response in HeLa cells through cell-cycle arrest at S-phase. Exhibits highly cytotoxic activities against cancer cell and non-cancer cell lines producing IC(50) values of 0.15 nM for human cervical carcinoma cells (HeLa), 7.71 nM for rat pheochromocytoma-12 cells (PC-12), 11.20 nM for human breast cancer cells (MCF-7), 15.80 nM for human leukemia cells (K562), 2.79 nM for African green monkey kidney cells (Vero) and 3.92 nM for normal Madin-Darby canine kidney cells (MDCK).</text>
</comment>
<comment type="subunit">
    <text evidence="1">Heterodimer of an A chain and a B chain; disulfide-linked.</text>
</comment>
<comment type="PTM">
    <text evidence="1">Glycosylated.</text>
</comment>
<comment type="mass spectrometry" mass="61875.0" method="MALDI" evidence="1">
    <text>The measured mass is that of the heterodimer.</text>
</comment>
<comment type="toxic dose">
    <text evidence="1">LD(50) is 26.22 ug/kg by intraperitoneal injection into IRC strain mice.</text>
</comment>
<comment type="toxic dose">
    <text evidence="1">LD(50) is 43.11 mg/kg by intragingival injection into IRC strain mice.</text>
</comment>
<feature type="chain" id="PRO_0000395441" description="Malanin chain B">
    <location>
        <begin position="1"/>
        <end position="10" status="greater than"/>
    </location>
</feature>
<feature type="unsure residue" description="More commonly a C" evidence="1">
    <location>
        <position position="4"/>
    </location>
</feature>
<feature type="non-terminal residue" evidence="2">
    <location>
        <position position="10"/>
    </location>
</feature>
<protein>
    <recommendedName>
        <fullName>Malanin chain B</fullName>
    </recommendedName>
</protein>
<name>MALNB_MALOL</name>
<keyword id="KW-0053">Apoptosis</keyword>
<keyword id="KW-0903">Direct protein sequencing</keyword>
<keyword id="KW-1015">Disulfide bond</keyword>
<keyword id="KW-0325">Glycoprotein</keyword>
<keyword id="KW-0611">Plant defense</keyword>
<keyword id="KW-0800">Toxin</keyword>
<organism>
    <name type="scientific">Malania oleifera</name>
    <name type="common">Garlic-fruit tree</name>
    <dbReference type="NCBI Taxonomy" id="397392"/>
    <lineage>
        <taxon>Eukaryota</taxon>
        <taxon>Viridiplantae</taxon>
        <taxon>Streptophyta</taxon>
        <taxon>Embryophyta</taxon>
        <taxon>Tracheophyta</taxon>
        <taxon>Spermatophyta</taxon>
        <taxon>Magnoliopsida</taxon>
        <taxon>eudicotyledons</taxon>
        <taxon>Gunneridae</taxon>
        <taxon>Pentapetalae</taxon>
        <taxon>Santalales</taxon>
        <taxon>Ximeniaceae</taxon>
        <taxon>Malania</taxon>
    </lineage>
</organism>
<evidence type="ECO:0000269" key="1">
    <source>
    </source>
</evidence>
<evidence type="ECO:0000303" key="2">
    <source>
    </source>
</evidence>
<evidence type="ECO:0000305" key="3"/>